<sequence length="295" mass="32795">MDVDKLIEAGKIAKKVREEAVKLAKPGVSLLELAEKIESRIVELGGKPAFPANLSLNEVAAHYTPYKGDQTVLKEGDYLKIDLGVHIDGYIADTAVTVRVGMDFDELMEAAKEALESAISVARAGVEVKELGKAIENEIRKRGFNPIVNLSGHKIERYKLHAGVSIPNIYRPHDNYVLQEGDVFAIEPFATTGAGQVIEVPPTLIYMYVRDAPVRMAQARFLLAKIKREYKTLPFAYRWLQGEMPEGQLKLALRSLERSGALYGYPVLREIRGGMVTQFEHTIIVEKDSVTVTTE</sequence>
<feature type="chain" id="PRO_0000148979" description="Methionine aminopeptidase">
    <location>
        <begin position="1"/>
        <end position="295"/>
    </location>
</feature>
<feature type="binding site" evidence="1">
    <location>
        <position position="62"/>
    </location>
    <ligand>
        <name>substrate</name>
    </ligand>
</feature>
<feature type="binding site" evidence="1">
    <location>
        <position position="82"/>
    </location>
    <ligand>
        <name>a divalent metal cation</name>
        <dbReference type="ChEBI" id="CHEBI:60240"/>
        <label>1</label>
    </ligand>
</feature>
<feature type="binding site" evidence="1">
    <location>
        <position position="93"/>
    </location>
    <ligand>
        <name>a divalent metal cation</name>
        <dbReference type="ChEBI" id="CHEBI:60240"/>
        <label>1</label>
    </ligand>
</feature>
<feature type="binding site" evidence="1">
    <location>
        <position position="93"/>
    </location>
    <ligand>
        <name>a divalent metal cation</name>
        <dbReference type="ChEBI" id="CHEBI:60240"/>
        <label>2</label>
        <note>catalytic</note>
    </ligand>
</feature>
<feature type="binding site" evidence="1">
    <location>
        <position position="153"/>
    </location>
    <ligand>
        <name>a divalent metal cation</name>
        <dbReference type="ChEBI" id="CHEBI:60240"/>
        <label>2</label>
        <note>catalytic</note>
    </ligand>
</feature>
<feature type="binding site" evidence="1">
    <location>
        <position position="161"/>
    </location>
    <ligand>
        <name>substrate</name>
    </ligand>
</feature>
<feature type="binding site" evidence="1">
    <location>
        <position position="187"/>
    </location>
    <ligand>
        <name>a divalent metal cation</name>
        <dbReference type="ChEBI" id="CHEBI:60240"/>
        <label>2</label>
        <note>catalytic</note>
    </ligand>
</feature>
<feature type="binding site" evidence="1">
    <location>
        <position position="280"/>
    </location>
    <ligand>
        <name>a divalent metal cation</name>
        <dbReference type="ChEBI" id="CHEBI:60240"/>
        <label>1</label>
    </ligand>
</feature>
<feature type="binding site" evidence="1">
    <location>
        <position position="280"/>
    </location>
    <ligand>
        <name>a divalent metal cation</name>
        <dbReference type="ChEBI" id="CHEBI:60240"/>
        <label>2</label>
        <note>catalytic</note>
    </ligand>
</feature>
<proteinExistence type="inferred from homology"/>
<organism>
    <name type="scientific">Pyrococcus horikoshii (strain ATCC 700860 / DSM 12428 / JCM 9974 / NBRC 100139 / OT-3)</name>
    <dbReference type="NCBI Taxonomy" id="70601"/>
    <lineage>
        <taxon>Archaea</taxon>
        <taxon>Methanobacteriati</taxon>
        <taxon>Methanobacteriota</taxon>
        <taxon>Thermococci</taxon>
        <taxon>Thermococcales</taxon>
        <taxon>Thermococcaceae</taxon>
        <taxon>Pyrococcus</taxon>
    </lineage>
</organism>
<reference key="1">
    <citation type="journal article" date="1998" name="DNA Res.">
        <title>Complete sequence and gene organization of the genome of a hyper-thermophilic archaebacterium, Pyrococcus horikoshii OT3.</title>
        <authorList>
            <person name="Kawarabayasi Y."/>
            <person name="Sawada M."/>
            <person name="Horikawa H."/>
            <person name="Haikawa Y."/>
            <person name="Hino Y."/>
            <person name="Yamamoto S."/>
            <person name="Sekine M."/>
            <person name="Baba S."/>
            <person name="Kosugi H."/>
            <person name="Hosoyama A."/>
            <person name="Nagai Y."/>
            <person name="Sakai M."/>
            <person name="Ogura K."/>
            <person name="Otsuka R."/>
            <person name="Nakazawa H."/>
            <person name="Takamiya M."/>
            <person name="Ohfuku Y."/>
            <person name="Funahashi T."/>
            <person name="Tanaka T."/>
            <person name="Kudoh Y."/>
            <person name="Yamazaki J."/>
            <person name="Kushida N."/>
            <person name="Oguchi A."/>
            <person name="Aoki K."/>
            <person name="Yoshizawa T."/>
            <person name="Nakamura Y."/>
            <person name="Robb F.T."/>
            <person name="Horikoshi K."/>
            <person name="Masuchi Y."/>
            <person name="Shizuya H."/>
            <person name="Kikuchi H."/>
        </authorList>
    </citation>
    <scope>NUCLEOTIDE SEQUENCE [LARGE SCALE GENOMIC DNA]</scope>
    <source>
        <strain>ATCC 700860 / DSM 12428 / JCM 9974 / NBRC 100139 / OT-3</strain>
    </source>
</reference>
<gene>
    <name evidence="1" type="primary">map</name>
    <name type="ordered locus">PH0628</name>
</gene>
<keyword id="KW-0031">Aminopeptidase</keyword>
<keyword id="KW-0378">Hydrolase</keyword>
<keyword id="KW-0479">Metal-binding</keyword>
<keyword id="KW-0645">Protease</keyword>
<accession>O58362</accession>
<dbReference type="EC" id="3.4.11.18" evidence="1"/>
<dbReference type="EMBL" id="BA000001">
    <property type="protein sequence ID" value="BAA29717.1"/>
    <property type="molecule type" value="Genomic_DNA"/>
</dbReference>
<dbReference type="PIR" id="C71107">
    <property type="entry name" value="C71107"/>
</dbReference>
<dbReference type="RefSeq" id="WP_010884726.1">
    <property type="nucleotide sequence ID" value="NC_000961.1"/>
</dbReference>
<dbReference type="SMR" id="O58362"/>
<dbReference type="STRING" id="70601.gene:9377570"/>
<dbReference type="MEROPS" id="M24.035"/>
<dbReference type="EnsemblBacteria" id="BAA29717">
    <property type="protein sequence ID" value="BAA29717"/>
    <property type="gene ID" value="BAA29717"/>
</dbReference>
<dbReference type="GeneID" id="1442960"/>
<dbReference type="KEGG" id="pho:PH0628"/>
<dbReference type="eggNOG" id="arCOG01001">
    <property type="taxonomic scope" value="Archaea"/>
</dbReference>
<dbReference type="OrthoDB" id="372008at2157"/>
<dbReference type="Proteomes" id="UP000000752">
    <property type="component" value="Chromosome"/>
</dbReference>
<dbReference type="GO" id="GO:0005737">
    <property type="term" value="C:cytoplasm"/>
    <property type="evidence" value="ECO:0007669"/>
    <property type="project" value="TreeGrafter"/>
</dbReference>
<dbReference type="GO" id="GO:0004239">
    <property type="term" value="F:initiator methionyl aminopeptidase activity"/>
    <property type="evidence" value="ECO:0007669"/>
    <property type="project" value="UniProtKB-UniRule"/>
</dbReference>
<dbReference type="GO" id="GO:0046872">
    <property type="term" value="F:metal ion binding"/>
    <property type="evidence" value="ECO:0007669"/>
    <property type="project" value="UniProtKB-UniRule"/>
</dbReference>
<dbReference type="GO" id="GO:0070006">
    <property type="term" value="F:metalloaminopeptidase activity"/>
    <property type="evidence" value="ECO:0007669"/>
    <property type="project" value="UniProtKB-UniRule"/>
</dbReference>
<dbReference type="GO" id="GO:0006508">
    <property type="term" value="P:proteolysis"/>
    <property type="evidence" value="ECO:0007669"/>
    <property type="project" value="UniProtKB-KW"/>
</dbReference>
<dbReference type="CDD" id="cd01088">
    <property type="entry name" value="MetAP2"/>
    <property type="match status" value="1"/>
</dbReference>
<dbReference type="Gene3D" id="3.90.230.10">
    <property type="entry name" value="Creatinase/methionine aminopeptidase superfamily"/>
    <property type="match status" value="1"/>
</dbReference>
<dbReference type="Gene3D" id="1.10.10.10">
    <property type="entry name" value="Winged helix-like DNA-binding domain superfamily/Winged helix DNA-binding domain"/>
    <property type="match status" value="1"/>
</dbReference>
<dbReference type="HAMAP" id="MF_01975">
    <property type="entry name" value="MetAP_2_arc"/>
    <property type="match status" value="1"/>
</dbReference>
<dbReference type="InterPro" id="IPR036005">
    <property type="entry name" value="Creatinase/aminopeptidase-like"/>
</dbReference>
<dbReference type="InterPro" id="IPR050247">
    <property type="entry name" value="Met_Aminopeptidase_Type2"/>
</dbReference>
<dbReference type="InterPro" id="IPR028595">
    <property type="entry name" value="MetAP_archaeal"/>
</dbReference>
<dbReference type="InterPro" id="IPR000994">
    <property type="entry name" value="Pept_M24"/>
</dbReference>
<dbReference type="InterPro" id="IPR001714">
    <property type="entry name" value="Pept_M24_MAP"/>
</dbReference>
<dbReference type="InterPro" id="IPR002468">
    <property type="entry name" value="Pept_M24A_MAP2"/>
</dbReference>
<dbReference type="InterPro" id="IPR018349">
    <property type="entry name" value="Pept_M24A_MAP2_BS"/>
</dbReference>
<dbReference type="InterPro" id="IPR036388">
    <property type="entry name" value="WH-like_DNA-bd_sf"/>
</dbReference>
<dbReference type="InterPro" id="IPR036390">
    <property type="entry name" value="WH_DNA-bd_sf"/>
</dbReference>
<dbReference type="NCBIfam" id="TIGR00501">
    <property type="entry name" value="met_pdase_II"/>
    <property type="match status" value="1"/>
</dbReference>
<dbReference type="PANTHER" id="PTHR45777">
    <property type="entry name" value="METHIONINE AMINOPEPTIDASE 2"/>
    <property type="match status" value="1"/>
</dbReference>
<dbReference type="PANTHER" id="PTHR45777:SF2">
    <property type="entry name" value="METHIONINE AMINOPEPTIDASE 2"/>
    <property type="match status" value="1"/>
</dbReference>
<dbReference type="Pfam" id="PF00557">
    <property type="entry name" value="Peptidase_M24"/>
    <property type="match status" value="1"/>
</dbReference>
<dbReference type="PRINTS" id="PR00599">
    <property type="entry name" value="MAPEPTIDASE"/>
</dbReference>
<dbReference type="SUPFAM" id="SSF55920">
    <property type="entry name" value="Creatinase/aminopeptidase"/>
    <property type="match status" value="1"/>
</dbReference>
<dbReference type="SUPFAM" id="SSF46785">
    <property type="entry name" value="Winged helix' DNA-binding domain"/>
    <property type="match status" value="1"/>
</dbReference>
<dbReference type="PROSITE" id="PS01202">
    <property type="entry name" value="MAP_2"/>
    <property type="match status" value="1"/>
</dbReference>
<protein>
    <recommendedName>
        <fullName evidence="1">Methionine aminopeptidase</fullName>
        <shortName evidence="1">MAP</shortName>
        <shortName evidence="1">MetAP</shortName>
        <ecNumber evidence="1">3.4.11.18</ecNumber>
    </recommendedName>
    <alternativeName>
        <fullName evidence="1">Peptidase M</fullName>
    </alternativeName>
</protein>
<name>MAP2_PYRHO</name>
<evidence type="ECO:0000255" key="1">
    <source>
        <dbReference type="HAMAP-Rule" id="MF_01975"/>
    </source>
</evidence>
<comment type="function">
    <text evidence="1">Removes the N-terminal methionine from nascent proteins. The N-terminal methionine is often cleaved when the second residue in the primary sequence is small and uncharged (Met-Ala-, Cys, Gly, Pro, Ser, Thr, or Val).</text>
</comment>
<comment type="catalytic activity">
    <reaction evidence="1">
        <text>Release of N-terminal amino acids, preferentially methionine, from peptides and arylamides.</text>
        <dbReference type="EC" id="3.4.11.18"/>
    </reaction>
</comment>
<comment type="cofactor">
    <cofactor evidence="1">
        <name>Co(2+)</name>
        <dbReference type="ChEBI" id="CHEBI:48828"/>
    </cofactor>
    <cofactor evidence="1">
        <name>Zn(2+)</name>
        <dbReference type="ChEBI" id="CHEBI:29105"/>
    </cofactor>
    <cofactor evidence="1">
        <name>Mn(2+)</name>
        <dbReference type="ChEBI" id="CHEBI:29035"/>
    </cofactor>
    <cofactor evidence="1">
        <name>Fe(2+)</name>
        <dbReference type="ChEBI" id="CHEBI:29033"/>
    </cofactor>
    <text evidence="1">Binds 2 divalent metal cations per subunit. Has a high-affinity and a low affinity metal-binding site. The true nature of the physiological cofactor is under debate. The enzyme is active with cobalt, zinc, manganese or divalent iron ions. Most likely, methionine aminopeptidases function as mononuclear Fe(2+)-metalloproteases under physiological conditions, and the catalytically relevant metal-binding site has been assigned to the histidine-containing high-affinity site.</text>
</comment>
<comment type="subunit">
    <text evidence="1">Monomer.</text>
</comment>
<comment type="similarity">
    <text evidence="1">Belongs to the peptidase M24A family. Methionine aminopeptidase archaeal type 2 subfamily.</text>
</comment>